<protein>
    <recommendedName>
        <fullName>Probable xyloglucan-specific endo-beta-1,4-glucanase A</fullName>
        <ecNumber>3.2.1.151</ecNumber>
    </recommendedName>
    <alternativeName>
        <fullName>Xyloglucanase A</fullName>
    </alternativeName>
    <alternativeName>
        <fullName>Xyloglucanendohydrolase A</fullName>
    </alternativeName>
</protein>
<gene>
    <name type="primary">xgeA</name>
    <name type="ORF">An01g03340</name>
</gene>
<proteinExistence type="inferred from homology"/>
<sequence length="241" mass="25483">MKVLALSALLSLASAASISRRSDFCGQWDTATAGDFILYNDLWGEDNASSGSQCTGVDSASGNEIAWHTSWSWEGGSSDVKSYANAALQFTGTQLSSISSIPSTWKWTYSGSDIVADVAYDMFLGSTADASSDEYEIMVWLAALGGAGPISSTGSTIATPTINGVTWDLYTGPNGDTTVYSFVAQSTTEDFSGDLNDFFTYLVDNEGVSDSLYLTTLEAGTEPFTGSDAELKVSEYSVSIE</sequence>
<accession>A2Q877</accession>
<reference key="1">
    <citation type="journal article" date="2007" name="Nat. Biotechnol.">
        <title>Genome sequencing and analysis of the versatile cell factory Aspergillus niger CBS 513.88.</title>
        <authorList>
            <person name="Pel H.J."/>
            <person name="de Winde J.H."/>
            <person name="Archer D.B."/>
            <person name="Dyer P.S."/>
            <person name="Hofmann G."/>
            <person name="Schaap P.J."/>
            <person name="Turner G."/>
            <person name="de Vries R.P."/>
            <person name="Albang R."/>
            <person name="Albermann K."/>
            <person name="Andersen M.R."/>
            <person name="Bendtsen J.D."/>
            <person name="Benen J.A.E."/>
            <person name="van den Berg M."/>
            <person name="Breestraat S."/>
            <person name="Caddick M.X."/>
            <person name="Contreras R."/>
            <person name="Cornell M."/>
            <person name="Coutinho P.M."/>
            <person name="Danchin E.G.J."/>
            <person name="Debets A.J.M."/>
            <person name="Dekker P."/>
            <person name="van Dijck P.W.M."/>
            <person name="van Dijk A."/>
            <person name="Dijkhuizen L."/>
            <person name="Driessen A.J.M."/>
            <person name="d'Enfert C."/>
            <person name="Geysens S."/>
            <person name="Goosen C."/>
            <person name="Groot G.S.P."/>
            <person name="de Groot P.W.J."/>
            <person name="Guillemette T."/>
            <person name="Henrissat B."/>
            <person name="Herweijer M."/>
            <person name="van den Hombergh J.P.T.W."/>
            <person name="van den Hondel C.A.M.J.J."/>
            <person name="van der Heijden R.T.J.M."/>
            <person name="van der Kaaij R.M."/>
            <person name="Klis F.M."/>
            <person name="Kools H.J."/>
            <person name="Kubicek C.P."/>
            <person name="van Kuyk P.A."/>
            <person name="Lauber J."/>
            <person name="Lu X."/>
            <person name="van der Maarel M.J.E.C."/>
            <person name="Meulenberg R."/>
            <person name="Menke H."/>
            <person name="Mortimer M.A."/>
            <person name="Nielsen J."/>
            <person name="Oliver S.G."/>
            <person name="Olsthoorn M."/>
            <person name="Pal K."/>
            <person name="van Peij N.N.M.E."/>
            <person name="Ram A.F.J."/>
            <person name="Rinas U."/>
            <person name="Roubos J.A."/>
            <person name="Sagt C.M.J."/>
            <person name="Schmoll M."/>
            <person name="Sun J."/>
            <person name="Ussery D."/>
            <person name="Varga J."/>
            <person name="Vervecken W."/>
            <person name="van de Vondervoort P.J.J."/>
            <person name="Wedler H."/>
            <person name="Woesten H.A.B."/>
            <person name="Zeng A.-P."/>
            <person name="van Ooyen A.J.J."/>
            <person name="Visser J."/>
            <person name="Stam H."/>
        </authorList>
    </citation>
    <scope>NUCLEOTIDE SEQUENCE [LARGE SCALE GENOMIC DNA]</scope>
    <source>
        <strain>ATCC MYA-4892 / CBS 513.88 / FGSC A1513</strain>
    </source>
</reference>
<evidence type="ECO:0000250" key="1"/>
<evidence type="ECO:0000255" key="2"/>
<evidence type="ECO:0000305" key="3"/>
<organism>
    <name type="scientific">Aspergillus niger (strain ATCC MYA-4892 / CBS 513.88 / FGSC A1513)</name>
    <dbReference type="NCBI Taxonomy" id="425011"/>
    <lineage>
        <taxon>Eukaryota</taxon>
        <taxon>Fungi</taxon>
        <taxon>Dikarya</taxon>
        <taxon>Ascomycota</taxon>
        <taxon>Pezizomycotina</taxon>
        <taxon>Eurotiomycetes</taxon>
        <taxon>Eurotiomycetidae</taxon>
        <taxon>Eurotiales</taxon>
        <taxon>Aspergillaceae</taxon>
        <taxon>Aspergillus</taxon>
        <taxon>Aspergillus subgen. Circumdati</taxon>
    </lineage>
</organism>
<name>XGEA_ASPNC</name>
<keyword id="KW-0119">Carbohydrate metabolism</keyword>
<keyword id="KW-0961">Cell wall biogenesis/degradation</keyword>
<keyword id="KW-0325">Glycoprotein</keyword>
<keyword id="KW-0326">Glycosidase</keyword>
<keyword id="KW-0378">Hydrolase</keyword>
<keyword id="KW-0624">Polysaccharide degradation</keyword>
<keyword id="KW-1185">Reference proteome</keyword>
<keyword id="KW-0964">Secreted</keyword>
<keyword id="KW-0732">Signal</keyword>
<feature type="signal peptide" evidence="2">
    <location>
        <begin position="1"/>
        <end position="15"/>
    </location>
</feature>
<feature type="chain" id="PRO_5000219338" description="Probable xyloglucan-specific endo-beta-1,4-glucanase A">
    <location>
        <begin position="16"/>
        <end position="241"/>
    </location>
</feature>
<feature type="glycosylation site" description="N-linked (GlcNAc...) asparagine" evidence="2">
    <location>
        <position position="47"/>
    </location>
</feature>
<dbReference type="EC" id="3.2.1.151"/>
<dbReference type="EMBL" id="AM269957">
    <property type="protein sequence ID" value="CAK36874.1"/>
    <property type="molecule type" value="Genomic_DNA"/>
</dbReference>
<dbReference type="RefSeq" id="XP_001388766.1">
    <property type="nucleotide sequence ID" value="XM_001388729.2"/>
</dbReference>
<dbReference type="SMR" id="A2Q877"/>
<dbReference type="CAZy" id="GH12">
    <property type="family name" value="Glycoside Hydrolase Family 12"/>
</dbReference>
<dbReference type="GlyCosmos" id="A2Q877">
    <property type="glycosylation" value="1 site, No reported glycans"/>
</dbReference>
<dbReference type="EnsemblFungi" id="CAK36874">
    <property type="protein sequence ID" value="CAK36874"/>
    <property type="gene ID" value="An01g03340"/>
</dbReference>
<dbReference type="GeneID" id="4977580"/>
<dbReference type="KEGG" id="ang:An01g03340"/>
<dbReference type="VEuPathDB" id="FungiDB:An01g03340"/>
<dbReference type="HOGENOM" id="CLU_051064_0_1_1"/>
<dbReference type="Proteomes" id="UP000006706">
    <property type="component" value="Chromosome 2R"/>
</dbReference>
<dbReference type="GO" id="GO:0005576">
    <property type="term" value="C:extracellular region"/>
    <property type="evidence" value="ECO:0007669"/>
    <property type="project" value="UniProtKB-SubCell"/>
</dbReference>
<dbReference type="GO" id="GO:0008810">
    <property type="term" value="F:cellulase activity"/>
    <property type="evidence" value="ECO:0007669"/>
    <property type="project" value="InterPro"/>
</dbReference>
<dbReference type="GO" id="GO:0033946">
    <property type="term" value="F:xyloglucan-specific endo-beta-1,4-glucanase activity"/>
    <property type="evidence" value="ECO:0007669"/>
    <property type="project" value="UniProtKB-EC"/>
</dbReference>
<dbReference type="GO" id="GO:0071555">
    <property type="term" value="P:cell wall organization"/>
    <property type="evidence" value="ECO:0007669"/>
    <property type="project" value="UniProtKB-KW"/>
</dbReference>
<dbReference type="GO" id="GO:0000272">
    <property type="term" value="P:polysaccharide catabolic process"/>
    <property type="evidence" value="ECO:0007669"/>
    <property type="project" value="UniProtKB-KW"/>
</dbReference>
<dbReference type="Gene3D" id="2.60.120.180">
    <property type="match status" value="1"/>
</dbReference>
<dbReference type="InterPro" id="IPR013320">
    <property type="entry name" value="ConA-like_dom_sf"/>
</dbReference>
<dbReference type="InterPro" id="IPR013319">
    <property type="entry name" value="GH11/12"/>
</dbReference>
<dbReference type="InterPro" id="IPR002594">
    <property type="entry name" value="GH12"/>
</dbReference>
<dbReference type="PANTHER" id="PTHR34002">
    <property type="entry name" value="BLR1656 PROTEIN"/>
    <property type="match status" value="1"/>
</dbReference>
<dbReference type="PANTHER" id="PTHR34002:SF9">
    <property type="entry name" value="XYLOGLUCAN-SPECIFIC ENDO-BETA-1,4-GLUCANASE A"/>
    <property type="match status" value="1"/>
</dbReference>
<dbReference type="Pfam" id="PF01670">
    <property type="entry name" value="Glyco_hydro_12"/>
    <property type="match status" value="1"/>
</dbReference>
<dbReference type="SUPFAM" id="SSF49899">
    <property type="entry name" value="Concanavalin A-like lectins/glucanases"/>
    <property type="match status" value="1"/>
</dbReference>
<comment type="function">
    <text evidence="1">Catalyzes endohydrolysis of 1,4-beta-D-glucosidic linkages in xyloglucan with retention of the beta-configuration of the glycosyl residues. Specific for xyloglucan and does not hydrolyze other cell wall components (By similarity).</text>
</comment>
<comment type="catalytic activity">
    <reaction>
        <text>xyloglucan + H2O = xyloglucan oligosaccharides.</text>
        <dbReference type="EC" id="3.2.1.151"/>
    </reaction>
</comment>
<comment type="subcellular location">
    <subcellularLocation>
        <location evidence="3">Secreted</location>
    </subcellularLocation>
</comment>
<comment type="similarity">
    <text evidence="3">Belongs to the glycosyl hydrolase 12 (cellulase H) family.</text>
</comment>